<dbReference type="EC" id="2.4.2.30" evidence="1"/>
<dbReference type="EC" id="2.4.2.-" evidence="1"/>
<dbReference type="EMBL" id="AP003258">
    <property type="protein sequence ID" value="BAD52929.1"/>
    <property type="status" value="ALT_SEQ"/>
    <property type="molecule type" value="Genomic_DNA"/>
</dbReference>
<dbReference type="EMBL" id="AP003764">
    <property type="protein sequence ID" value="BAD53855.1"/>
    <property type="status" value="ALT_SEQ"/>
    <property type="molecule type" value="Genomic_DNA"/>
</dbReference>
<dbReference type="EMBL" id="AP008207">
    <property type="protein sequence ID" value="BAF04898.2"/>
    <property type="status" value="ALT_SEQ"/>
    <property type="molecule type" value="Genomic_DNA"/>
</dbReference>
<dbReference type="EMBL" id="AP014957">
    <property type="status" value="NOT_ANNOTATED_CDS"/>
    <property type="molecule type" value="Genomic_DNA"/>
</dbReference>
<dbReference type="SMR" id="Q5Z8Q9"/>
<dbReference type="FunCoup" id="Q5Z8Q9">
    <property type="interactions" value="1630"/>
</dbReference>
<dbReference type="STRING" id="39947.Q5Z8Q9"/>
<dbReference type="PaxDb" id="39947-Q5Z8Q9"/>
<dbReference type="KEGG" id="dosa:Os01g0351200"/>
<dbReference type="eggNOG" id="KOG1037">
    <property type="taxonomic scope" value="Eukaryota"/>
</dbReference>
<dbReference type="HOGENOM" id="CLU_004841_2_1_1"/>
<dbReference type="InParanoid" id="Q5Z8Q9"/>
<dbReference type="Proteomes" id="UP000000763">
    <property type="component" value="Chromosome 1"/>
</dbReference>
<dbReference type="Proteomes" id="UP000059680">
    <property type="component" value="Chromosome 1"/>
</dbReference>
<dbReference type="GO" id="GO:0005730">
    <property type="term" value="C:nucleolus"/>
    <property type="evidence" value="ECO:0000318"/>
    <property type="project" value="GO_Central"/>
</dbReference>
<dbReference type="GO" id="GO:0003677">
    <property type="term" value="F:DNA binding"/>
    <property type="evidence" value="ECO:0007669"/>
    <property type="project" value="UniProtKB-KW"/>
</dbReference>
<dbReference type="GO" id="GO:0003950">
    <property type="term" value="F:NAD+ poly-ADP-ribosyltransferase activity"/>
    <property type="evidence" value="ECO:0000318"/>
    <property type="project" value="GO_Central"/>
</dbReference>
<dbReference type="GO" id="GO:0140806">
    <property type="term" value="F:NAD+-protein-aspartate ADP-ribosyltransferase activity"/>
    <property type="evidence" value="ECO:0007669"/>
    <property type="project" value="RHEA"/>
</dbReference>
<dbReference type="GO" id="GO:0140807">
    <property type="term" value="F:NAD+-protein-glutamate ADP-ribosyltransferase activity"/>
    <property type="evidence" value="ECO:0007669"/>
    <property type="project" value="RHEA"/>
</dbReference>
<dbReference type="GO" id="GO:0016779">
    <property type="term" value="F:nucleotidyltransferase activity"/>
    <property type="evidence" value="ECO:0007669"/>
    <property type="project" value="UniProtKB-KW"/>
</dbReference>
<dbReference type="GO" id="GO:0006302">
    <property type="term" value="P:double-strand break repair"/>
    <property type="evidence" value="ECO:0000318"/>
    <property type="project" value="GO_Central"/>
</dbReference>
<dbReference type="CDD" id="cd01437">
    <property type="entry name" value="parp_like"/>
    <property type="match status" value="1"/>
</dbReference>
<dbReference type="CDD" id="cd08002">
    <property type="entry name" value="WGR_PARP3_like"/>
    <property type="match status" value="1"/>
</dbReference>
<dbReference type="FunFam" id="1.10.720.30:FF:000023">
    <property type="entry name" value="Poly [ADP-ribose] polymerase"/>
    <property type="match status" value="1"/>
</dbReference>
<dbReference type="FunFam" id="1.20.142.10:FF:000005">
    <property type="entry name" value="Poly [ADP-ribose] polymerase"/>
    <property type="match status" value="1"/>
</dbReference>
<dbReference type="FunFam" id="2.20.140.10:FF:000001">
    <property type="entry name" value="Poly [ADP-ribose] polymerase"/>
    <property type="match status" value="1"/>
</dbReference>
<dbReference type="FunFam" id="3.90.228.10:FF:000002">
    <property type="entry name" value="Poly [ADP-ribose] polymerase"/>
    <property type="match status" value="1"/>
</dbReference>
<dbReference type="Gene3D" id="3.90.228.10">
    <property type="match status" value="1"/>
</dbReference>
<dbReference type="Gene3D" id="1.20.142.10">
    <property type="entry name" value="Poly(ADP-ribose) polymerase, regulatory domain"/>
    <property type="match status" value="1"/>
</dbReference>
<dbReference type="Gene3D" id="1.10.720.30">
    <property type="entry name" value="SAP domain"/>
    <property type="match status" value="2"/>
</dbReference>
<dbReference type="Gene3D" id="2.20.140.10">
    <property type="entry name" value="WGR domain"/>
    <property type="match status" value="1"/>
</dbReference>
<dbReference type="InterPro" id="IPR050800">
    <property type="entry name" value="ARTD/PARP"/>
</dbReference>
<dbReference type="InterPro" id="IPR012317">
    <property type="entry name" value="Poly(ADP-ribose)pol_cat_dom"/>
</dbReference>
<dbReference type="InterPro" id="IPR004102">
    <property type="entry name" value="Poly(ADP-ribose)pol_reg_dom"/>
</dbReference>
<dbReference type="InterPro" id="IPR036616">
    <property type="entry name" value="Poly(ADP-ribose)pol_reg_dom_sf"/>
</dbReference>
<dbReference type="InterPro" id="IPR003034">
    <property type="entry name" value="SAP_dom"/>
</dbReference>
<dbReference type="InterPro" id="IPR036361">
    <property type="entry name" value="SAP_dom_sf"/>
</dbReference>
<dbReference type="InterPro" id="IPR036930">
    <property type="entry name" value="WGR_dom_sf"/>
</dbReference>
<dbReference type="InterPro" id="IPR008893">
    <property type="entry name" value="WGR_domain"/>
</dbReference>
<dbReference type="PANTHER" id="PTHR10459">
    <property type="entry name" value="DNA LIGASE"/>
    <property type="match status" value="1"/>
</dbReference>
<dbReference type="PANTHER" id="PTHR10459:SF60">
    <property type="entry name" value="POLY [ADP-RIBOSE] POLYMERASE 2"/>
    <property type="match status" value="1"/>
</dbReference>
<dbReference type="Pfam" id="PF00644">
    <property type="entry name" value="PARP"/>
    <property type="match status" value="1"/>
</dbReference>
<dbReference type="Pfam" id="PF02877">
    <property type="entry name" value="PARP_reg"/>
    <property type="match status" value="1"/>
</dbReference>
<dbReference type="Pfam" id="PF02037">
    <property type="entry name" value="SAP"/>
    <property type="match status" value="2"/>
</dbReference>
<dbReference type="Pfam" id="PF05406">
    <property type="entry name" value="WGR"/>
    <property type="match status" value="1"/>
</dbReference>
<dbReference type="SMART" id="SM00513">
    <property type="entry name" value="SAP"/>
    <property type="match status" value="2"/>
</dbReference>
<dbReference type="SMART" id="SM00773">
    <property type="entry name" value="WGR"/>
    <property type="match status" value="1"/>
</dbReference>
<dbReference type="SUPFAM" id="SSF56399">
    <property type="entry name" value="ADP-ribosylation"/>
    <property type="match status" value="1"/>
</dbReference>
<dbReference type="SUPFAM" id="SSF47587">
    <property type="entry name" value="Domain of poly(ADP-ribose) polymerase"/>
    <property type="match status" value="1"/>
</dbReference>
<dbReference type="SUPFAM" id="SSF68906">
    <property type="entry name" value="SAP domain"/>
    <property type="match status" value="1"/>
</dbReference>
<dbReference type="SUPFAM" id="SSF142921">
    <property type="entry name" value="WGR domain-like"/>
    <property type="match status" value="1"/>
</dbReference>
<dbReference type="PROSITE" id="PS51060">
    <property type="entry name" value="PARP_ALPHA_HD"/>
    <property type="match status" value="1"/>
</dbReference>
<dbReference type="PROSITE" id="PS51059">
    <property type="entry name" value="PARP_CATALYTIC"/>
    <property type="match status" value="1"/>
</dbReference>
<dbReference type="PROSITE" id="PS50800">
    <property type="entry name" value="SAP"/>
    <property type="match status" value="2"/>
</dbReference>
<dbReference type="PROSITE" id="PS51977">
    <property type="entry name" value="WGR"/>
    <property type="match status" value="1"/>
</dbReference>
<feature type="chain" id="PRO_0000260503" description="Poly [ADP-ribose] polymerase 2-A">
    <location>
        <begin position="1"/>
        <end position="660"/>
    </location>
</feature>
<feature type="domain" description="SAP 1" evidence="3">
    <location>
        <begin position="2"/>
        <end position="36"/>
    </location>
</feature>
<feature type="domain" description="SAP 2" evidence="3">
    <location>
        <begin position="91"/>
        <end position="125"/>
    </location>
</feature>
<feature type="domain" description="WGR" evidence="6">
    <location>
        <begin position="179"/>
        <end position="281"/>
    </location>
</feature>
<feature type="domain" description="PARP alpha-helical" evidence="5">
    <location>
        <begin position="308"/>
        <end position="426"/>
    </location>
</feature>
<feature type="domain" description="PARP catalytic" evidence="4">
    <location>
        <begin position="434"/>
        <end position="660"/>
    </location>
</feature>
<feature type="region of interest" description="Disordered" evidence="7">
    <location>
        <begin position="40"/>
        <end position="92"/>
    </location>
</feature>
<feature type="short sequence motif" description="Nuclear localization signal" evidence="2">
    <location>
        <begin position="69"/>
        <end position="75"/>
    </location>
</feature>
<reference key="1">
    <citation type="journal article" date="2002" name="Nature">
        <title>The genome sequence and structure of rice chromosome 1.</title>
        <authorList>
            <person name="Sasaki T."/>
            <person name="Matsumoto T."/>
            <person name="Yamamoto K."/>
            <person name="Sakata K."/>
            <person name="Baba T."/>
            <person name="Katayose Y."/>
            <person name="Wu J."/>
            <person name="Niimura Y."/>
            <person name="Cheng Z."/>
            <person name="Nagamura Y."/>
            <person name="Antonio B.A."/>
            <person name="Kanamori H."/>
            <person name="Hosokawa S."/>
            <person name="Masukawa M."/>
            <person name="Arikawa K."/>
            <person name="Chiden Y."/>
            <person name="Hayashi M."/>
            <person name="Okamoto M."/>
            <person name="Ando T."/>
            <person name="Aoki H."/>
            <person name="Arita K."/>
            <person name="Hamada M."/>
            <person name="Harada C."/>
            <person name="Hijishita S."/>
            <person name="Honda M."/>
            <person name="Ichikawa Y."/>
            <person name="Idonuma A."/>
            <person name="Iijima M."/>
            <person name="Ikeda M."/>
            <person name="Ikeno M."/>
            <person name="Ito S."/>
            <person name="Ito T."/>
            <person name="Ito Y."/>
            <person name="Ito Y."/>
            <person name="Iwabuchi A."/>
            <person name="Kamiya K."/>
            <person name="Karasawa W."/>
            <person name="Katagiri S."/>
            <person name="Kikuta A."/>
            <person name="Kobayashi N."/>
            <person name="Kono I."/>
            <person name="Machita K."/>
            <person name="Maehara T."/>
            <person name="Mizuno H."/>
            <person name="Mizubayashi T."/>
            <person name="Mukai Y."/>
            <person name="Nagasaki H."/>
            <person name="Nakashima M."/>
            <person name="Nakama Y."/>
            <person name="Nakamichi Y."/>
            <person name="Nakamura M."/>
            <person name="Namiki N."/>
            <person name="Negishi M."/>
            <person name="Ohta I."/>
            <person name="Ono N."/>
            <person name="Saji S."/>
            <person name="Sakai K."/>
            <person name="Shibata M."/>
            <person name="Shimokawa T."/>
            <person name="Shomura A."/>
            <person name="Song J."/>
            <person name="Takazaki Y."/>
            <person name="Terasawa K."/>
            <person name="Tsuji K."/>
            <person name="Waki K."/>
            <person name="Yamagata H."/>
            <person name="Yamane H."/>
            <person name="Yoshiki S."/>
            <person name="Yoshihara R."/>
            <person name="Yukawa K."/>
            <person name="Zhong H."/>
            <person name="Iwama H."/>
            <person name="Endo T."/>
            <person name="Ito H."/>
            <person name="Hahn J.H."/>
            <person name="Kim H.-I."/>
            <person name="Eun M.-Y."/>
            <person name="Yano M."/>
            <person name="Jiang J."/>
            <person name="Gojobori T."/>
        </authorList>
    </citation>
    <scope>NUCLEOTIDE SEQUENCE [LARGE SCALE GENOMIC DNA]</scope>
    <source>
        <strain>cv. Nipponbare</strain>
    </source>
</reference>
<reference key="2">
    <citation type="journal article" date="2005" name="Nature">
        <title>The map-based sequence of the rice genome.</title>
        <authorList>
            <consortium name="International rice genome sequencing project (IRGSP)"/>
        </authorList>
    </citation>
    <scope>NUCLEOTIDE SEQUENCE [LARGE SCALE GENOMIC DNA]</scope>
    <source>
        <strain>cv. Nipponbare</strain>
    </source>
</reference>
<reference key="3">
    <citation type="journal article" date="2008" name="Nucleic Acids Res.">
        <title>The rice annotation project database (RAP-DB): 2008 update.</title>
        <authorList>
            <consortium name="The rice annotation project (RAP)"/>
        </authorList>
    </citation>
    <scope>GENOME REANNOTATION</scope>
    <source>
        <strain>cv. Nipponbare</strain>
    </source>
</reference>
<reference key="4">
    <citation type="journal article" date="2013" name="Rice">
        <title>Improvement of the Oryza sativa Nipponbare reference genome using next generation sequence and optical map data.</title>
        <authorList>
            <person name="Kawahara Y."/>
            <person name="de la Bastide M."/>
            <person name="Hamilton J.P."/>
            <person name="Kanamori H."/>
            <person name="McCombie W.R."/>
            <person name="Ouyang S."/>
            <person name="Schwartz D.C."/>
            <person name="Tanaka T."/>
            <person name="Wu J."/>
            <person name="Zhou S."/>
            <person name="Childs K.L."/>
            <person name="Davidson R.M."/>
            <person name="Lin H."/>
            <person name="Quesada-Ocampo L."/>
            <person name="Vaillancourt B."/>
            <person name="Sakai H."/>
            <person name="Lee S.S."/>
            <person name="Kim J."/>
            <person name="Numa H."/>
            <person name="Itoh T."/>
            <person name="Buell C.R."/>
            <person name="Matsumoto T."/>
        </authorList>
    </citation>
    <scope>GENOME REANNOTATION</scope>
    <source>
        <strain>cv. Nipponbare</strain>
    </source>
</reference>
<gene>
    <name type="primary">PARP2-A</name>
    <name type="ordered locus">Os01g0351200</name>
    <name type="ordered locus">LOC_Os01g24940</name>
    <name type="ORF">B1051E10.55</name>
    <name type="ORF">P0463A02.25</name>
</gene>
<sequence length="660" mass="74297">MSARLRVEELRAELQRRGLDASGNKPVLVRRLDAAIRKEEEEEAAVSAAAKEEADAGGVVDGEGNGEDKRKRKRRGDGEDVDNSESDAAKLEGMSYRELQALAKSRGLAANGSKKEVIERLLCAPSDTDGGVQDKKKIAKGFADGDDRVEECRKEKIVTATRKGAAVLDQHIPDHIKMTYHVLQVWFLLKGDEIYDATMNQTNVGDNNNKFYIIQALESDAGGSFMVYNRWGRVGARGQDKLHGPFSSREQAIYEFEGKFHGKTNNHWSDRKSFECYARKYTWLEMDYGEADRETNKKVSPSTDQIKETKLETRIASFISLICNISMMKQQMVEIGYNSDKLPLGKLSKSTIFKGYDVLKRISNVISRADRRQLEQLTGEFYTVIPHDFGFKKMREFIIDTPQKLKAKLEMVEALGEIEIATKLLEDDSTDQDDPLYARYKQLSCDFTPLEVGSEEYSMIKTYLANTHGKTHTSYTVDVVQIFKVSRHGEMERFQKFATAGNRMLLWHGSRLTNWAGILSQGLRIAPPEAPVTGYMFGKGVYFADMFSKSANYCYASEACRSGVLLLCEVALGEMNELLNADYDANNLPKGKLSTKGVGQTEPNTAESKITDDGVVVPLGKPKAEPSKRGSLLYNEFIVYNVDQIRMRYVLHVSFNFKKR</sequence>
<name>PRP2A_ORYSJ</name>
<accession>Q5Z8Q9</accession>
<accession>Q0JMY0</accession>
<organism>
    <name type="scientific">Oryza sativa subsp. japonica</name>
    <name type="common">Rice</name>
    <dbReference type="NCBI Taxonomy" id="39947"/>
    <lineage>
        <taxon>Eukaryota</taxon>
        <taxon>Viridiplantae</taxon>
        <taxon>Streptophyta</taxon>
        <taxon>Embryophyta</taxon>
        <taxon>Tracheophyta</taxon>
        <taxon>Spermatophyta</taxon>
        <taxon>Magnoliopsida</taxon>
        <taxon>Liliopsida</taxon>
        <taxon>Poales</taxon>
        <taxon>Poaceae</taxon>
        <taxon>BOP clade</taxon>
        <taxon>Oryzoideae</taxon>
        <taxon>Oryzeae</taxon>
        <taxon>Oryzinae</taxon>
        <taxon>Oryza</taxon>
        <taxon>Oryza sativa</taxon>
    </lineage>
</organism>
<evidence type="ECO:0000250" key="1">
    <source>
        <dbReference type="UniProtKB" id="P09874"/>
    </source>
</evidence>
<evidence type="ECO:0000255" key="2"/>
<evidence type="ECO:0000255" key="3">
    <source>
        <dbReference type="PROSITE-ProRule" id="PRU00186"/>
    </source>
</evidence>
<evidence type="ECO:0000255" key="4">
    <source>
        <dbReference type="PROSITE-ProRule" id="PRU00397"/>
    </source>
</evidence>
<evidence type="ECO:0000255" key="5">
    <source>
        <dbReference type="PROSITE-ProRule" id="PRU00398"/>
    </source>
</evidence>
<evidence type="ECO:0000255" key="6">
    <source>
        <dbReference type="PROSITE-ProRule" id="PRU01321"/>
    </source>
</evidence>
<evidence type="ECO:0000256" key="7">
    <source>
        <dbReference type="SAM" id="MobiDB-lite"/>
    </source>
</evidence>
<evidence type="ECO:0000305" key="8"/>
<proteinExistence type="inferred from homology"/>
<keyword id="KW-0013">ADP-ribosylation</keyword>
<keyword id="KW-0238">DNA-binding</keyword>
<keyword id="KW-0328">Glycosyltransferase</keyword>
<keyword id="KW-0520">NAD</keyword>
<keyword id="KW-0548">Nucleotidyltransferase</keyword>
<keyword id="KW-0539">Nucleus</keyword>
<keyword id="KW-1185">Reference proteome</keyword>
<keyword id="KW-0677">Repeat</keyword>
<keyword id="KW-0808">Transferase</keyword>
<protein>
    <recommendedName>
        <fullName>Poly [ADP-ribose] polymerase 2-A</fullName>
        <shortName>PARP-2-A</shortName>
        <ecNumber evidence="1">2.4.2.30</ecNumber>
    </recommendedName>
    <alternativeName>
        <fullName>NAD(+) ADP-ribosyltransferase 2-A</fullName>
        <shortName>ADPRT-2-A</shortName>
    </alternativeName>
    <alternativeName>
        <fullName>Poly[ADP-ribose] synthase 2-A</fullName>
    </alternativeName>
    <alternativeName>
        <fullName evidence="1">Protein ADP-ribosyltransferase PARP2</fullName>
        <ecNumber evidence="1">2.4.2.-</ecNumber>
    </alternativeName>
</protein>
<comment type="function">
    <text evidence="1">Involved in the base excision repair (BER) pathway, by catalyzing the poly(ADP-ribosyl)ation of a limited number of acceptor proteins involved in chromatin architecture and in DNA metabolism. This modification follows DNA damages and appears as an obligatory step in a detection/signaling pathway leading to the reparation of DNA strand breaks (By similarity).</text>
</comment>
<comment type="catalytic activity">
    <reaction evidence="1">
        <text>NAD(+) + (ADP-D-ribosyl)n-acceptor = nicotinamide + (ADP-D-ribosyl)n+1-acceptor + H(+).</text>
        <dbReference type="EC" id="2.4.2.30"/>
    </reaction>
</comment>
<comment type="catalytic activity">
    <reaction evidence="1">
        <text>L-aspartyl-[protein] + NAD(+) = 4-O-(ADP-D-ribosyl)-L-aspartyl-[protein] + nicotinamide</text>
        <dbReference type="Rhea" id="RHEA:54424"/>
        <dbReference type="Rhea" id="RHEA-COMP:9867"/>
        <dbReference type="Rhea" id="RHEA-COMP:13832"/>
        <dbReference type="ChEBI" id="CHEBI:17154"/>
        <dbReference type="ChEBI" id="CHEBI:29961"/>
        <dbReference type="ChEBI" id="CHEBI:57540"/>
        <dbReference type="ChEBI" id="CHEBI:138102"/>
    </reaction>
</comment>
<comment type="catalytic activity">
    <reaction evidence="1">
        <text>L-glutamyl-[protein] + NAD(+) = 5-O-(ADP-D-ribosyl)-L-glutamyl-[protein] + nicotinamide</text>
        <dbReference type="Rhea" id="RHEA:58224"/>
        <dbReference type="Rhea" id="RHEA-COMP:10208"/>
        <dbReference type="Rhea" id="RHEA-COMP:15089"/>
        <dbReference type="ChEBI" id="CHEBI:17154"/>
        <dbReference type="ChEBI" id="CHEBI:29973"/>
        <dbReference type="ChEBI" id="CHEBI:57540"/>
        <dbReference type="ChEBI" id="CHEBI:142540"/>
    </reaction>
</comment>
<comment type="subcellular location">
    <subcellularLocation>
        <location evidence="8">Nucleus</location>
    </subcellularLocation>
</comment>
<comment type="similarity">
    <text evidence="8">Belongs to the ARTD/PARP family.</text>
</comment>
<comment type="sequence caution" evidence="8">
    <conflict type="erroneous gene model prediction">
        <sequence resource="EMBL-CDS" id="BAD52929"/>
    </conflict>
</comment>
<comment type="sequence caution" evidence="8">
    <conflict type="erroneous gene model prediction">
        <sequence resource="EMBL-CDS" id="BAD53855"/>
    </conflict>
</comment>
<comment type="sequence caution" evidence="8">
    <conflict type="erroneous gene model prediction">
        <sequence resource="EMBL-CDS" id="BAF04898"/>
    </conflict>
</comment>